<protein>
    <recommendedName>
        <fullName evidence="1">GTPase Era</fullName>
    </recommendedName>
</protein>
<name>ERA_NEIMF</name>
<comment type="function">
    <text evidence="1">An essential GTPase that binds both GDP and GTP, with rapid nucleotide exchange. Plays a role in 16S rRNA processing and 30S ribosomal subunit biogenesis and possibly also in cell cycle regulation and energy metabolism.</text>
</comment>
<comment type="subunit">
    <text evidence="1">Monomer.</text>
</comment>
<comment type="subcellular location">
    <subcellularLocation>
        <location>Cytoplasm</location>
    </subcellularLocation>
    <subcellularLocation>
        <location evidence="1">Cell inner membrane</location>
        <topology evidence="1">Peripheral membrane protein</topology>
    </subcellularLocation>
</comment>
<comment type="similarity">
    <text evidence="1 2">Belongs to the TRAFAC class TrmE-Era-EngA-EngB-Septin-like GTPase superfamily. Era GTPase family.</text>
</comment>
<organism>
    <name type="scientific">Neisseria meningitidis serogroup C / serotype 2a (strain ATCC 700532 / DSM 15464 / FAM18)</name>
    <dbReference type="NCBI Taxonomy" id="272831"/>
    <lineage>
        <taxon>Bacteria</taxon>
        <taxon>Pseudomonadati</taxon>
        <taxon>Pseudomonadota</taxon>
        <taxon>Betaproteobacteria</taxon>
        <taxon>Neisseriales</taxon>
        <taxon>Neisseriaceae</taxon>
        <taxon>Neisseria</taxon>
    </lineage>
</organism>
<gene>
    <name evidence="1" type="primary">era</name>
    <name type="ordered locus">NMC0638</name>
</gene>
<feature type="chain" id="PRO_1000079716" description="GTPase Era">
    <location>
        <begin position="1"/>
        <end position="307"/>
    </location>
</feature>
<feature type="domain" description="Era-type G" evidence="2">
    <location>
        <begin position="17"/>
        <end position="186"/>
    </location>
</feature>
<feature type="domain" description="KH type-2" evidence="1">
    <location>
        <begin position="217"/>
        <end position="293"/>
    </location>
</feature>
<feature type="region of interest" description="G1" evidence="2">
    <location>
        <begin position="25"/>
        <end position="32"/>
    </location>
</feature>
<feature type="region of interest" description="G2" evidence="2">
    <location>
        <begin position="51"/>
        <end position="55"/>
    </location>
</feature>
<feature type="region of interest" description="G3" evidence="2">
    <location>
        <begin position="72"/>
        <end position="75"/>
    </location>
</feature>
<feature type="region of interest" description="G4" evidence="2">
    <location>
        <begin position="133"/>
        <end position="136"/>
    </location>
</feature>
<feature type="region of interest" description="G5" evidence="2">
    <location>
        <begin position="165"/>
        <end position="167"/>
    </location>
</feature>
<feature type="binding site" evidence="1">
    <location>
        <begin position="25"/>
        <end position="32"/>
    </location>
    <ligand>
        <name>GTP</name>
        <dbReference type="ChEBI" id="CHEBI:37565"/>
    </ligand>
</feature>
<feature type="binding site" evidence="1">
    <location>
        <begin position="72"/>
        <end position="76"/>
    </location>
    <ligand>
        <name>GTP</name>
        <dbReference type="ChEBI" id="CHEBI:37565"/>
    </ligand>
</feature>
<feature type="binding site" evidence="1">
    <location>
        <begin position="133"/>
        <end position="136"/>
    </location>
    <ligand>
        <name>GTP</name>
        <dbReference type="ChEBI" id="CHEBI:37565"/>
    </ligand>
</feature>
<proteinExistence type="inferred from homology"/>
<evidence type="ECO:0000255" key="1">
    <source>
        <dbReference type="HAMAP-Rule" id="MF_00367"/>
    </source>
</evidence>
<evidence type="ECO:0000255" key="2">
    <source>
        <dbReference type="PROSITE-ProRule" id="PRU01050"/>
    </source>
</evidence>
<keyword id="KW-0997">Cell inner membrane</keyword>
<keyword id="KW-1003">Cell membrane</keyword>
<keyword id="KW-0963">Cytoplasm</keyword>
<keyword id="KW-0342">GTP-binding</keyword>
<keyword id="KW-0472">Membrane</keyword>
<keyword id="KW-0547">Nucleotide-binding</keyword>
<keyword id="KW-0690">Ribosome biogenesis</keyword>
<keyword id="KW-0694">RNA-binding</keyword>
<keyword id="KW-0699">rRNA-binding</keyword>
<dbReference type="EMBL" id="AM421808">
    <property type="protein sequence ID" value="CAM09931.1"/>
    <property type="molecule type" value="Genomic_DNA"/>
</dbReference>
<dbReference type="RefSeq" id="WP_002222780.1">
    <property type="nucleotide sequence ID" value="NC_008767.1"/>
</dbReference>
<dbReference type="SMR" id="A1KSV0"/>
<dbReference type="KEGG" id="nmc:NMC0638"/>
<dbReference type="HOGENOM" id="CLU_038009_1_2_4"/>
<dbReference type="Proteomes" id="UP000002286">
    <property type="component" value="Chromosome"/>
</dbReference>
<dbReference type="GO" id="GO:0005829">
    <property type="term" value="C:cytosol"/>
    <property type="evidence" value="ECO:0007669"/>
    <property type="project" value="TreeGrafter"/>
</dbReference>
<dbReference type="GO" id="GO:0005886">
    <property type="term" value="C:plasma membrane"/>
    <property type="evidence" value="ECO:0007669"/>
    <property type="project" value="UniProtKB-SubCell"/>
</dbReference>
<dbReference type="GO" id="GO:0005525">
    <property type="term" value="F:GTP binding"/>
    <property type="evidence" value="ECO:0007669"/>
    <property type="project" value="UniProtKB-UniRule"/>
</dbReference>
<dbReference type="GO" id="GO:0003924">
    <property type="term" value="F:GTPase activity"/>
    <property type="evidence" value="ECO:0007669"/>
    <property type="project" value="UniProtKB-UniRule"/>
</dbReference>
<dbReference type="GO" id="GO:0043024">
    <property type="term" value="F:ribosomal small subunit binding"/>
    <property type="evidence" value="ECO:0007669"/>
    <property type="project" value="TreeGrafter"/>
</dbReference>
<dbReference type="GO" id="GO:0070181">
    <property type="term" value="F:small ribosomal subunit rRNA binding"/>
    <property type="evidence" value="ECO:0007669"/>
    <property type="project" value="UniProtKB-UniRule"/>
</dbReference>
<dbReference type="GO" id="GO:0000028">
    <property type="term" value="P:ribosomal small subunit assembly"/>
    <property type="evidence" value="ECO:0007669"/>
    <property type="project" value="TreeGrafter"/>
</dbReference>
<dbReference type="CDD" id="cd04163">
    <property type="entry name" value="Era"/>
    <property type="match status" value="1"/>
</dbReference>
<dbReference type="CDD" id="cd22534">
    <property type="entry name" value="KH-II_Era"/>
    <property type="match status" value="1"/>
</dbReference>
<dbReference type="FunFam" id="3.30.300.20:FF:000003">
    <property type="entry name" value="GTPase Era"/>
    <property type="match status" value="1"/>
</dbReference>
<dbReference type="FunFam" id="3.40.50.300:FF:000094">
    <property type="entry name" value="GTPase Era"/>
    <property type="match status" value="1"/>
</dbReference>
<dbReference type="Gene3D" id="3.30.300.20">
    <property type="match status" value="1"/>
</dbReference>
<dbReference type="Gene3D" id="3.40.50.300">
    <property type="entry name" value="P-loop containing nucleotide triphosphate hydrolases"/>
    <property type="match status" value="1"/>
</dbReference>
<dbReference type="HAMAP" id="MF_00367">
    <property type="entry name" value="GTPase_Era"/>
    <property type="match status" value="1"/>
</dbReference>
<dbReference type="InterPro" id="IPR030388">
    <property type="entry name" value="G_ERA_dom"/>
</dbReference>
<dbReference type="InterPro" id="IPR006073">
    <property type="entry name" value="GTP-bd"/>
</dbReference>
<dbReference type="InterPro" id="IPR005662">
    <property type="entry name" value="GTPase_Era-like"/>
</dbReference>
<dbReference type="InterPro" id="IPR015946">
    <property type="entry name" value="KH_dom-like_a/b"/>
</dbReference>
<dbReference type="InterPro" id="IPR004044">
    <property type="entry name" value="KH_dom_type_2"/>
</dbReference>
<dbReference type="InterPro" id="IPR009019">
    <property type="entry name" value="KH_sf_prok-type"/>
</dbReference>
<dbReference type="InterPro" id="IPR027417">
    <property type="entry name" value="P-loop_NTPase"/>
</dbReference>
<dbReference type="InterPro" id="IPR005225">
    <property type="entry name" value="Small_GTP-bd"/>
</dbReference>
<dbReference type="NCBIfam" id="TIGR00436">
    <property type="entry name" value="era"/>
    <property type="match status" value="1"/>
</dbReference>
<dbReference type="NCBIfam" id="NF000908">
    <property type="entry name" value="PRK00089.1"/>
    <property type="match status" value="1"/>
</dbReference>
<dbReference type="NCBIfam" id="TIGR00231">
    <property type="entry name" value="small_GTP"/>
    <property type="match status" value="1"/>
</dbReference>
<dbReference type="PANTHER" id="PTHR42698">
    <property type="entry name" value="GTPASE ERA"/>
    <property type="match status" value="1"/>
</dbReference>
<dbReference type="PANTHER" id="PTHR42698:SF1">
    <property type="entry name" value="GTPASE ERA, MITOCHONDRIAL"/>
    <property type="match status" value="1"/>
</dbReference>
<dbReference type="Pfam" id="PF07650">
    <property type="entry name" value="KH_2"/>
    <property type="match status" value="1"/>
</dbReference>
<dbReference type="Pfam" id="PF01926">
    <property type="entry name" value="MMR_HSR1"/>
    <property type="match status" value="1"/>
</dbReference>
<dbReference type="PRINTS" id="PR00326">
    <property type="entry name" value="GTP1OBG"/>
</dbReference>
<dbReference type="SUPFAM" id="SSF52540">
    <property type="entry name" value="P-loop containing nucleoside triphosphate hydrolases"/>
    <property type="match status" value="1"/>
</dbReference>
<dbReference type="SUPFAM" id="SSF54814">
    <property type="entry name" value="Prokaryotic type KH domain (KH-domain type II)"/>
    <property type="match status" value="1"/>
</dbReference>
<dbReference type="PROSITE" id="PS51713">
    <property type="entry name" value="G_ERA"/>
    <property type="match status" value="1"/>
</dbReference>
<dbReference type="PROSITE" id="PS50823">
    <property type="entry name" value="KH_TYPE_2"/>
    <property type="match status" value="1"/>
</dbReference>
<sequence>MDIETFLAGERAAGGYRCGFVAIVGRPNVGKSTLMNHLIGQKISITSKKAQTTRNRVTGIYTDDTAQFVFVDTPGFQTDHRNALNDRLNQNVTEALGGVDVVVFVVEAMRFTDADRVVLKQLPKHTPVILVVNKIDKDKAKDRYALEAFVAQVRAEFEFAAAEAVSAKHGLRIANLLELLKPYLPESVPMYPEDMVTDKSARFLAMEIVREKLFRYLGEELPYAMNVEVEQFEEEDGLNRIYIAVLVDKESQKAILIGKGGERLKKISTEARLDMEKLFDTKVFLKVWVKVKSGWADDIRFLRELGL</sequence>
<reference key="1">
    <citation type="journal article" date="2007" name="PLoS Genet.">
        <title>Meningococcal genetic variation mechanisms viewed through comparative analysis of serogroup C strain FAM18.</title>
        <authorList>
            <person name="Bentley S.D."/>
            <person name="Vernikos G.S."/>
            <person name="Snyder L.A.S."/>
            <person name="Churcher C."/>
            <person name="Arrowsmith C."/>
            <person name="Chillingworth T."/>
            <person name="Cronin A."/>
            <person name="Davis P.H."/>
            <person name="Holroyd N.E."/>
            <person name="Jagels K."/>
            <person name="Maddison M."/>
            <person name="Moule S."/>
            <person name="Rabbinowitsch E."/>
            <person name="Sharp S."/>
            <person name="Unwin L."/>
            <person name="Whitehead S."/>
            <person name="Quail M.A."/>
            <person name="Achtman M."/>
            <person name="Barrell B.G."/>
            <person name="Saunders N.J."/>
            <person name="Parkhill J."/>
        </authorList>
    </citation>
    <scope>NUCLEOTIDE SEQUENCE [LARGE SCALE GENOMIC DNA]</scope>
    <source>
        <strain>ATCC 700532 / DSM 15464 / FAM18</strain>
    </source>
</reference>
<accession>A1KSV0</accession>